<evidence type="ECO:0000255" key="1">
    <source>
        <dbReference type="HAMAP-Rule" id="MF_01006"/>
    </source>
</evidence>
<accession>B1YIX1</accession>
<keyword id="KW-0046">Antibiotic resistance</keyword>
<keyword id="KW-1003">Cell membrane</keyword>
<keyword id="KW-0133">Cell shape</keyword>
<keyword id="KW-0961">Cell wall biogenesis/degradation</keyword>
<keyword id="KW-0378">Hydrolase</keyword>
<keyword id="KW-0472">Membrane</keyword>
<keyword id="KW-0573">Peptidoglycan synthesis</keyword>
<keyword id="KW-1185">Reference proteome</keyword>
<keyword id="KW-0812">Transmembrane</keyword>
<keyword id="KW-1133">Transmembrane helix</keyword>
<gene>
    <name evidence="1" type="primary">uppP</name>
    <name type="ordered locus">Exig_0419</name>
</gene>
<comment type="function">
    <text evidence="1">Catalyzes the dephosphorylation of undecaprenyl diphosphate (UPP). Confers resistance to bacitracin.</text>
</comment>
<comment type="catalytic activity">
    <reaction evidence="1">
        <text>di-trans,octa-cis-undecaprenyl diphosphate + H2O = di-trans,octa-cis-undecaprenyl phosphate + phosphate + H(+)</text>
        <dbReference type="Rhea" id="RHEA:28094"/>
        <dbReference type="ChEBI" id="CHEBI:15377"/>
        <dbReference type="ChEBI" id="CHEBI:15378"/>
        <dbReference type="ChEBI" id="CHEBI:43474"/>
        <dbReference type="ChEBI" id="CHEBI:58405"/>
        <dbReference type="ChEBI" id="CHEBI:60392"/>
        <dbReference type="EC" id="3.6.1.27"/>
    </reaction>
</comment>
<comment type="subcellular location">
    <subcellularLocation>
        <location evidence="1">Cell membrane</location>
        <topology evidence="1">Multi-pass membrane protein</topology>
    </subcellularLocation>
</comment>
<comment type="miscellaneous">
    <text>Bacitracin is thought to be involved in the inhibition of peptidoglycan synthesis by sequestering undecaprenyl diphosphate, thereby reducing the pool of lipid carrier available.</text>
</comment>
<comment type="similarity">
    <text evidence="1">Belongs to the UppP family.</text>
</comment>
<sequence length="278" mass="30464">MTIIELLKALLLGFIEGMTEFAPVSSTGHMIIVDDMWLQTTDFLGKYSANTFKIVIQLGSILAVIVVFWKRLFSLIGLYKIEGEHDASGTHKLKLRHVLIGLLPAAVLGLLFEDFIDENLFSIDTVIIGLAAGAILMIAADKLGPKEPKTTSLDQISYRQAALVGLFQCISLWPGFSRSGSTISGGVFLGMNHRTAADFTFIMAVPIMFGASALSLVKNWEYINVGDLGFYVVGFIASFGFALLSIRFFLKLINKIKLVPFAIYRLVLAAVLAVIVYM</sequence>
<reference key="1">
    <citation type="submission" date="2008-04" db="EMBL/GenBank/DDBJ databases">
        <title>Complete sequence of chromosome of Exiguobacterium sibiricum 255-15.</title>
        <authorList>
            <consortium name="US DOE Joint Genome Institute"/>
            <person name="Copeland A."/>
            <person name="Lucas S."/>
            <person name="Lapidus A."/>
            <person name="Glavina del Rio T."/>
            <person name="Dalin E."/>
            <person name="Tice H."/>
            <person name="Bruce D."/>
            <person name="Goodwin L."/>
            <person name="Pitluck S."/>
            <person name="Kiss H."/>
            <person name="Chertkov O."/>
            <person name="Monk C."/>
            <person name="Brettin T."/>
            <person name="Detter J.C."/>
            <person name="Han C."/>
            <person name="Kuske C.R."/>
            <person name="Schmutz J."/>
            <person name="Larimer F."/>
            <person name="Land M."/>
            <person name="Hauser L."/>
            <person name="Kyrpides N."/>
            <person name="Mikhailova N."/>
            <person name="Vishnivetskaya T."/>
            <person name="Rodrigues D.F."/>
            <person name="Gilichinsky D."/>
            <person name="Tiedje J."/>
            <person name="Richardson P."/>
        </authorList>
    </citation>
    <scope>NUCLEOTIDE SEQUENCE [LARGE SCALE GENOMIC DNA]</scope>
    <source>
        <strain>DSM 17290 / CCUG 55495 / CIP 109462 / JCM 13490 / 255-15</strain>
    </source>
</reference>
<protein>
    <recommendedName>
        <fullName evidence="1">Undecaprenyl-diphosphatase</fullName>
        <ecNumber evidence="1">3.6.1.27</ecNumber>
    </recommendedName>
    <alternativeName>
        <fullName evidence="1">Bacitracin resistance protein</fullName>
    </alternativeName>
    <alternativeName>
        <fullName evidence="1">Undecaprenyl pyrophosphate phosphatase</fullName>
    </alternativeName>
</protein>
<name>UPPP_EXIS2</name>
<dbReference type="EC" id="3.6.1.27" evidence="1"/>
<dbReference type="EMBL" id="CP001022">
    <property type="protein sequence ID" value="ACB59901.1"/>
    <property type="molecule type" value="Genomic_DNA"/>
</dbReference>
<dbReference type="RefSeq" id="WP_012369325.1">
    <property type="nucleotide sequence ID" value="NC_010556.1"/>
</dbReference>
<dbReference type="SMR" id="B1YIX1"/>
<dbReference type="STRING" id="262543.Exig_0419"/>
<dbReference type="KEGG" id="esi:Exig_0419"/>
<dbReference type="eggNOG" id="COG1968">
    <property type="taxonomic scope" value="Bacteria"/>
</dbReference>
<dbReference type="HOGENOM" id="CLU_060296_2_0_9"/>
<dbReference type="OrthoDB" id="9808289at2"/>
<dbReference type="Proteomes" id="UP000001681">
    <property type="component" value="Chromosome"/>
</dbReference>
<dbReference type="GO" id="GO:0005886">
    <property type="term" value="C:plasma membrane"/>
    <property type="evidence" value="ECO:0007669"/>
    <property type="project" value="UniProtKB-SubCell"/>
</dbReference>
<dbReference type="GO" id="GO:0050380">
    <property type="term" value="F:undecaprenyl-diphosphatase activity"/>
    <property type="evidence" value="ECO:0007669"/>
    <property type="project" value="UniProtKB-UniRule"/>
</dbReference>
<dbReference type="GO" id="GO:0071555">
    <property type="term" value="P:cell wall organization"/>
    <property type="evidence" value="ECO:0007669"/>
    <property type="project" value="UniProtKB-KW"/>
</dbReference>
<dbReference type="GO" id="GO:0009252">
    <property type="term" value="P:peptidoglycan biosynthetic process"/>
    <property type="evidence" value="ECO:0007669"/>
    <property type="project" value="UniProtKB-KW"/>
</dbReference>
<dbReference type="GO" id="GO:0008360">
    <property type="term" value="P:regulation of cell shape"/>
    <property type="evidence" value="ECO:0007669"/>
    <property type="project" value="UniProtKB-KW"/>
</dbReference>
<dbReference type="GO" id="GO:0046677">
    <property type="term" value="P:response to antibiotic"/>
    <property type="evidence" value="ECO:0007669"/>
    <property type="project" value="UniProtKB-UniRule"/>
</dbReference>
<dbReference type="HAMAP" id="MF_01006">
    <property type="entry name" value="Undec_diphosphatase"/>
    <property type="match status" value="1"/>
</dbReference>
<dbReference type="InterPro" id="IPR003824">
    <property type="entry name" value="UppP"/>
</dbReference>
<dbReference type="NCBIfam" id="NF001390">
    <property type="entry name" value="PRK00281.1-4"/>
    <property type="match status" value="1"/>
</dbReference>
<dbReference type="NCBIfam" id="TIGR00753">
    <property type="entry name" value="undec_PP_bacA"/>
    <property type="match status" value="1"/>
</dbReference>
<dbReference type="PANTHER" id="PTHR30622">
    <property type="entry name" value="UNDECAPRENYL-DIPHOSPHATASE"/>
    <property type="match status" value="1"/>
</dbReference>
<dbReference type="PANTHER" id="PTHR30622:SF3">
    <property type="entry name" value="UNDECAPRENYL-DIPHOSPHATASE"/>
    <property type="match status" value="1"/>
</dbReference>
<dbReference type="Pfam" id="PF02673">
    <property type="entry name" value="BacA"/>
    <property type="match status" value="1"/>
</dbReference>
<proteinExistence type="inferred from homology"/>
<organism>
    <name type="scientific">Exiguobacterium sibiricum (strain DSM 17290 / CCUG 55495 / CIP 109462 / JCM 13490 / 255-15)</name>
    <dbReference type="NCBI Taxonomy" id="262543"/>
    <lineage>
        <taxon>Bacteria</taxon>
        <taxon>Bacillati</taxon>
        <taxon>Bacillota</taxon>
        <taxon>Bacilli</taxon>
        <taxon>Bacillales</taxon>
        <taxon>Bacillales Family XII. Incertae Sedis</taxon>
        <taxon>Exiguobacterium</taxon>
    </lineage>
</organism>
<feature type="chain" id="PRO_1000197373" description="Undecaprenyl-diphosphatase">
    <location>
        <begin position="1"/>
        <end position="278"/>
    </location>
</feature>
<feature type="transmembrane region" description="Helical" evidence="1">
    <location>
        <begin position="49"/>
        <end position="69"/>
    </location>
</feature>
<feature type="transmembrane region" description="Helical" evidence="1">
    <location>
        <begin position="97"/>
        <end position="117"/>
    </location>
</feature>
<feature type="transmembrane region" description="Helical" evidence="1">
    <location>
        <begin position="120"/>
        <end position="140"/>
    </location>
</feature>
<feature type="transmembrane region" description="Helical" evidence="1">
    <location>
        <begin position="197"/>
        <end position="217"/>
    </location>
</feature>
<feature type="transmembrane region" description="Helical" evidence="1">
    <location>
        <begin position="226"/>
        <end position="246"/>
    </location>
</feature>
<feature type="transmembrane region" description="Helical" evidence="1">
    <location>
        <begin position="258"/>
        <end position="278"/>
    </location>
</feature>